<dbReference type="EC" id="2.7.11.-"/>
<dbReference type="EMBL" id="AP000380">
    <property type="protein sequence ID" value="BAA98098.1"/>
    <property type="molecule type" value="Genomic_DNA"/>
</dbReference>
<dbReference type="EMBL" id="CP002688">
    <property type="protein sequence ID" value="AED96490.1"/>
    <property type="molecule type" value="Genomic_DNA"/>
</dbReference>
<dbReference type="RefSeq" id="NP_200249.1">
    <property type="nucleotide sequence ID" value="NM_124818.4"/>
</dbReference>
<dbReference type="SMR" id="Q9LK35"/>
<dbReference type="BioGRID" id="20770">
    <property type="interactions" value="1"/>
</dbReference>
<dbReference type="FunCoup" id="Q9LK35">
    <property type="interactions" value="120"/>
</dbReference>
<dbReference type="STRING" id="3702.Q9LK35"/>
<dbReference type="GlyCosmos" id="Q9LK35">
    <property type="glycosylation" value="14 sites, No reported glycans"/>
</dbReference>
<dbReference type="GlyGen" id="Q9LK35">
    <property type="glycosylation" value="14 sites"/>
</dbReference>
<dbReference type="iPTMnet" id="Q9LK35"/>
<dbReference type="SwissPalm" id="Q9LK35"/>
<dbReference type="PaxDb" id="3702-AT5G54380.1"/>
<dbReference type="ProteomicsDB" id="246404"/>
<dbReference type="EnsemblPlants" id="AT5G54380.1">
    <property type="protein sequence ID" value="AT5G54380.1"/>
    <property type="gene ID" value="AT5G54380"/>
</dbReference>
<dbReference type="GeneID" id="835526"/>
<dbReference type="Gramene" id="AT5G54380.1">
    <property type="protein sequence ID" value="AT5G54380.1"/>
    <property type="gene ID" value="AT5G54380"/>
</dbReference>
<dbReference type="KEGG" id="ath:AT5G54380"/>
<dbReference type="Araport" id="AT5G54380"/>
<dbReference type="TAIR" id="AT5G54380">
    <property type="gene designation" value="THE1"/>
</dbReference>
<dbReference type="eggNOG" id="KOG1187">
    <property type="taxonomic scope" value="Eukaryota"/>
</dbReference>
<dbReference type="HOGENOM" id="CLU_000288_42_2_1"/>
<dbReference type="InParanoid" id="Q9LK35"/>
<dbReference type="OMA" id="VVSMPNE"/>
<dbReference type="PhylomeDB" id="Q9LK35"/>
<dbReference type="PRO" id="PR:Q9LK35"/>
<dbReference type="Proteomes" id="UP000006548">
    <property type="component" value="Chromosome 5"/>
</dbReference>
<dbReference type="ExpressionAtlas" id="Q9LK35">
    <property type="expression patterns" value="baseline and differential"/>
</dbReference>
<dbReference type="GO" id="GO:0005886">
    <property type="term" value="C:plasma membrane"/>
    <property type="evidence" value="ECO:0000314"/>
    <property type="project" value="TAIR"/>
</dbReference>
<dbReference type="GO" id="GO:0009506">
    <property type="term" value="C:plasmodesma"/>
    <property type="evidence" value="ECO:0007005"/>
    <property type="project" value="TAIR"/>
</dbReference>
<dbReference type="GO" id="GO:0005524">
    <property type="term" value="F:ATP binding"/>
    <property type="evidence" value="ECO:0007669"/>
    <property type="project" value="UniProtKB-KW"/>
</dbReference>
<dbReference type="GO" id="GO:0004672">
    <property type="term" value="F:protein kinase activity"/>
    <property type="evidence" value="ECO:0000314"/>
    <property type="project" value="TAIR"/>
</dbReference>
<dbReference type="GO" id="GO:0004674">
    <property type="term" value="F:protein serine/threonine kinase activity"/>
    <property type="evidence" value="ECO:0007669"/>
    <property type="project" value="UniProtKB-KW"/>
</dbReference>
<dbReference type="GO" id="GO:0050832">
    <property type="term" value="P:defense response to fungus"/>
    <property type="evidence" value="ECO:0000315"/>
    <property type="project" value="TAIR"/>
</dbReference>
<dbReference type="GO" id="GO:0046777">
    <property type="term" value="P:protein autophosphorylation"/>
    <property type="evidence" value="ECO:0000314"/>
    <property type="project" value="TAIR"/>
</dbReference>
<dbReference type="GO" id="GO:0009741">
    <property type="term" value="P:response to brassinosteroid"/>
    <property type="evidence" value="ECO:0000316"/>
    <property type="project" value="TAIR"/>
</dbReference>
<dbReference type="GO" id="GO:0009826">
    <property type="term" value="P:unidimensional cell growth"/>
    <property type="evidence" value="ECO:0000316"/>
    <property type="project" value="TAIR"/>
</dbReference>
<dbReference type="CDD" id="cd14066">
    <property type="entry name" value="STKc_IRAK"/>
    <property type="match status" value="1"/>
</dbReference>
<dbReference type="FunFam" id="2.60.120.430:FF:000005">
    <property type="entry name" value="Putative receptor-like protein kinase"/>
    <property type="match status" value="1"/>
</dbReference>
<dbReference type="FunFam" id="1.10.510.10:FF:000058">
    <property type="entry name" value="Receptor-like protein kinase FERONIA"/>
    <property type="match status" value="1"/>
</dbReference>
<dbReference type="FunFam" id="2.60.120.430:FF:000001">
    <property type="entry name" value="Receptor-like protein kinase FERONIA"/>
    <property type="match status" value="1"/>
</dbReference>
<dbReference type="FunFam" id="3.30.200.20:FF:000039">
    <property type="entry name" value="receptor-like protein kinase FERONIA"/>
    <property type="match status" value="1"/>
</dbReference>
<dbReference type="Gene3D" id="2.60.120.430">
    <property type="entry name" value="Galactose-binding lectin"/>
    <property type="match status" value="2"/>
</dbReference>
<dbReference type="Gene3D" id="3.30.200.20">
    <property type="entry name" value="Phosphorylase Kinase, domain 1"/>
    <property type="match status" value="1"/>
</dbReference>
<dbReference type="Gene3D" id="1.10.510.10">
    <property type="entry name" value="Transferase(Phosphotransferase) domain 1"/>
    <property type="match status" value="1"/>
</dbReference>
<dbReference type="InterPro" id="IPR011009">
    <property type="entry name" value="Kinase-like_dom_sf"/>
</dbReference>
<dbReference type="InterPro" id="IPR024788">
    <property type="entry name" value="Malectin-like_Carb-bd_dom"/>
</dbReference>
<dbReference type="InterPro" id="IPR000719">
    <property type="entry name" value="Prot_kinase_dom"/>
</dbReference>
<dbReference type="InterPro" id="IPR017441">
    <property type="entry name" value="Protein_kinase_ATP_BS"/>
</dbReference>
<dbReference type="InterPro" id="IPR001245">
    <property type="entry name" value="Ser-Thr/Tyr_kinase_cat_dom"/>
</dbReference>
<dbReference type="InterPro" id="IPR008271">
    <property type="entry name" value="Ser/Thr_kinase_AS"/>
</dbReference>
<dbReference type="PANTHER" id="PTHR47989">
    <property type="entry name" value="OS01G0750732 PROTEIN"/>
    <property type="match status" value="1"/>
</dbReference>
<dbReference type="PANTHER" id="PTHR47989:SF62">
    <property type="entry name" value="OS05G0423500 PROTEIN"/>
    <property type="match status" value="1"/>
</dbReference>
<dbReference type="Pfam" id="PF12819">
    <property type="entry name" value="Malectin_like"/>
    <property type="match status" value="1"/>
</dbReference>
<dbReference type="Pfam" id="PF07714">
    <property type="entry name" value="PK_Tyr_Ser-Thr"/>
    <property type="match status" value="1"/>
</dbReference>
<dbReference type="SMART" id="SM00220">
    <property type="entry name" value="S_TKc"/>
    <property type="match status" value="1"/>
</dbReference>
<dbReference type="SUPFAM" id="SSF56112">
    <property type="entry name" value="Protein kinase-like (PK-like)"/>
    <property type="match status" value="1"/>
</dbReference>
<dbReference type="PROSITE" id="PS00107">
    <property type="entry name" value="PROTEIN_KINASE_ATP"/>
    <property type="match status" value="1"/>
</dbReference>
<dbReference type="PROSITE" id="PS50011">
    <property type="entry name" value="PROTEIN_KINASE_DOM"/>
    <property type="match status" value="1"/>
</dbReference>
<dbReference type="PROSITE" id="PS00108">
    <property type="entry name" value="PROTEIN_KINASE_ST"/>
    <property type="match status" value="1"/>
</dbReference>
<protein>
    <recommendedName>
        <fullName>Receptor-like protein kinase THESEUS 1</fullName>
        <ecNumber>2.7.11.-</ecNumber>
    </recommendedName>
</protein>
<name>THE1_ARATH</name>
<comment type="function">
    <text evidence="5 6">Receptor-like protein kinase required for cell elongation during vegetative growth, mostly in a brassinosteroid-(BR-) independent manner. Mediates the response of growing plant cells to the perturbation of cellulose synthesis and may act as a cell-wall-integrity sensor. Controls ectopic-lignin accumulation in cellulose-deficient mutant backgrounds.</text>
</comment>
<comment type="subcellular location">
    <subcellularLocation>
        <location evidence="5 7">Cell membrane</location>
        <topology evidence="5 7">Single-pass type I membrane protein</topology>
    </subcellularLocation>
</comment>
<comment type="tissue specificity">
    <text evidence="5 6">Expressed in most vegetative tissues, including leaves, stems and roots, primarily in expanding cells and vascular tissue.</text>
</comment>
<comment type="induction">
    <text evidence="6">By brassinosteroids (BR).</text>
</comment>
<comment type="PTM">
    <text>Autophosphorylated.</text>
</comment>
<comment type="disruption phenotype">
    <text evidence="5 6">No visible phenotype; due to redundancy with HERK1. Herk1 and the1 double mutants are stunted. In the1-4, shorter hypocotyls without brassinolide (BL) treatment. In the1-3, partially restored hypocotyl growth defect of prc1-8 and of other cellulose-deficient mutants.</text>
</comment>
<comment type="miscellaneous">
    <text>Semidominant suppressor of the cellulose-deficient mutant procuste1-1.</text>
</comment>
<comment type="miscellaneous">
    <text>This protein was called 'Theseus' after the Greek mythological figure Theseus, who slew the brigand Procustes.</text>
</comment>
<comment type="similarity">
    <text evidence="2">Belongs to the protein kinase superfamily. Ser/Thr protein kinase family.</text>
</comment>
<reference key="1">
    <citation type="submission" date="1999-07" db="EMBL/GenBank/DDBJ databases">
        <title>Structural analysis of Arabidopsis thaliana chromosome 5. XI.</title>
        <authorList>
            <person name="Kaneko T."/>
            <person name="Katoh T."/>
            <person name="Asamizu E."/>
            <person name="Sato S."/>
            <person name="Nakamura Y."/>
            <person name="Kotani H."/>
            <person name="Tabata S."/>
        </authorList>
    </citation>
    <scope>NUCLEOTIDE SEQUENCE [LARGE SCALE GENOMIC DNA]</scope>
    <source>
        <strain>cv. Columbia</strain>
    </source>
</reference>
<reference key="2">
    <citation type="journal article" date="2017" name="Plant J.">
        <title>Araport11: a complete reannotation of the Arabidopsis thaliana reference genome.</title>
        <authorList>
            <person name="Cheng C.Y."/>
            <person name="Krishnakumar V."/>
            <person name="Chan A.P."/>
            <person name="Thibaud-Nissen F."/>
            <person name="Schobel S."/>
            <person name="Town C.D."/>
        </authorList>
    </citation>
    <scope>GENOME REANNOTATION</scope>
    <source>
        <strain>cv. Columbia</strain>
    </source>
</reference>
<reference key="3">
    <citation type="journal article" date="2003" name="Mol. Cell. Proteomics">
        <title>Large-scale analysis of in vivo phosphorylated membrane proteins by immobilized metal ion affinity chromatography and mass spectrometry.</title>
        <authorList>
            <person name="Nuehse T.S."/>
            <person name="Stensballe A."/>
            <person name="Jensen O.N."/>
            <person name="Peck S.C."/>
        </authorList>
    </citation>
    <scope>IDENTIFICATION BY MASS SPECTROMETRY [LARGE SCALE ANALYSIS]</scope>
    <source>
        <strain>cv. La-0</strain>
    </source>
</reference>
<reference key="4">
    <citation type="journal article" date="2004" name="Plant Cell">
        <title>Phosphoproteomics of the Arabidopsis plasma membrane and a new phosphorylation site database.</title>
        <authorList>
            <person name="Nuehse T.S."/>
            <person name="Stensballe A."/>
            <person name="Jensen O.N."/>
            <person name="Peck S.C."/>
        </authorList>
    </citation>
    <scope>IDENTIFICATION BY MASS SPECTROMETRY [LARGE SCALE ANALYSIS]</scope>
</reference>
<reference key="5">
    <citation type="journal article" date="2007" name="Curr. Biol.">
        <title>A receptor-like kinase mediates the response of Arabidopsis cells to the inhibition of cellulose synthesis.</title>
        <authorList>
            <person name="Hematy K."/>
            <person name="Sado P.-E."/>
            <person name="Van Tuinen A."/>
            <person name="Rochange S."/>
            <person name="Desnos T."/>
            <person name="Balzergue S."/>
            <person name="Pelletier S."/>
            <person name="Renou J.-P."/>
            <person name="Hoefte H."/>
        </authorList>
    </citation>
    <scope>FUNCTION</scope>
    <scope>MUTAGENESIS OF GLY-37 AND GLU-150</scope>
    <scope>SUBCELLULAR LOCATION</scope>
    <scope>TISSUE SPECIFICITY</scope>
    <scope>AUTOPHOSPHORYLATION</scope>
    <scope>DISRUPTION PHENOTYPE</scope>
</reference>
<reference key="6">
    <citation type="journal article" date="2007" name="Mol. Cell. Proteomics">
        <title>A high content in lipid-modified peripheral proteins and integral receptor kinases features in the arabidopsis plasma membrane proteome.</title>
        <authorList>
            <person name="Marmagne A."/>
            <person name="Ferro M."/>
            <person name="Meinnel T."/>
            <person name="Bruley C."/>
            <person name="Kuhn L."/>
            <person name="Garin J."/>
            <person name="Barbier-Brygoo H."/>
            <person name="Ephritikhine G."/>
        </authorList>
    </citation>
    <scope>IDENTIFICATION BY MASS SPECTROMETRY</scope>
    <scope>SUBCELLULAR LOCATION [LARGE SCALE ANALYSIS]</scope>
</reference>
<reference key="7">
    <citation type="journal article" date="2009" name="Mol. Plant">
        <title>Diverse transcriptional programs associated with environmental stress and hormones in the Arabidopsis receptor-like kinase gene family.</title>
        <authorList>
            <person name="Chae L."/>
            <person name="Sudat S."/>
            <person name="Dudoit S."/>
            <person name="Zhu T."/>
            <person name="Luan S."/>
        </authorList>
    </citation>
    <scope>GENE FAMILY</scope>
</reference>
<reference key="8">
    <citation type="journal article" date="2009" name="Proc. Natl. Acad. Sci. U.S.A.">
        <title>Three related receptor-like kinases are required for optimal cell elongation in Arabidopsis thaliana.</title>
        <authorList>
            <person name="Guo H."/>
            <person name="Li L."/>
            <person name="Ye H."/>
            <person name="Yu X."/>
            <person name="Algreen A."/>
            <person name="Yin Y."/>
        </authorList>
    </citation>
    <scope>FUNCTION</scope>
    <scope>DISRUPTION PHENOTYPE</scope>
    <scope>TISSUE SPECIFICITY</scope>
    <scope>INDUCTION BY BRASSINOSTEROIDS</scope>
</reference>
<proteinExistence type="evidence at protein level"/>
<keyword id="KW-0067">ATP-binding</keyword>
<keyword id="KW-1003">Cell membrane</keyword>
<keyword id="KW-0325">Glycoprotein</keyword>
<keyword id="KW-0418">Kinase</keyword>
<keyword id="KW-0472">Membrane</keyword>
<keyword id="KW-0547">Nucleotide-binding</keyword>
<keyword id="KW-0597">Phosphoprotein</keyword>
<keyword id="KW-1185">Reference proteome</keyword>
<keyword id="KW-0723">Serine/threonine-protein kinase</keyword>
<keyword id="KW-0732">Signal</keyword>
<keyword id="KW-0808">Transferase</keyword>
<keyword id="KW-0812">Transmembrane</keyword>
<keyword id="KW-1133">Transmembrane helix</keyword>
<organism>
    <name type="scientific">Arabidopsis thaliana</name>
    <name type="common">Mouse-ear cress</name>
    <dbReference type="NCBI Taxonomy" id="3702"/>
    <lineage>
        <taxon>Eukaryota</taxon>
        <taxon>Viridiplantae</taxon>
        <taxon>Streptophyta</taxon>
        <taxon>Embryophyta</taxon>
        <taxon>Tracheophyta</taxon>
        <taxon>Spermatophyta</taxon>
        <taxon>Magnoliopsida</taxon>
        <taxon>eudicotyledons</taxon>
        <taxon>Gunneridae</taxon>
        <taxon>Pentapetalae</taxon>
        <taxon>rosids</taxon>
        <taxon>malvids</taxon>
        <taxon>Brassicales</taxon>
        <taxon>Brassicaceae</taxon>
        <taxon>Camelineae</taxon>
        <taxon>Arabidopsis</taxon>
    </lineage>
</organism>
<evidence type="ECO:0000255" key="1"/>
<evidence type="ECO:0000255" key="2">
    <source>
        <dbReference type="PROSITE-ProRule" id="PRU00159"/>
    </source>
</evidence>
<evidence type="ECO:0000255" key="3">
    <source>
        <dbReference type="PROSITE-ProRule" id="PRU10027"/>
    </source>
</evidence>
<evidence type="ECO:0000256" key="4">
    <source>
        <dbReference type="SAM" id="MobiDB-lite"/>
    </source>
</evidence>
<evidence type="ECO:0000269" key="5">
    <source>
    </source>
</evidence>
<evidence type="ECO:0000269" key="6">
    <source>
    </source>
</evidence>
<evidence type="ECO:0000305" key="7">
    <source>
    </source>
</evidence>
<accession>Q9LK35</accession>
<gene>
    <name type="primary">THE1</name>
    <name type="ordered locus">At5g54380</name>
    <name type="ORF">GA469.3</name>
</gene>
<feature type="signal peptide" evidence="1">
    <location>
        <begin position="1"/>
        <end position="22"/>
    </location>
</feature>
<feature type="chain" id="PRO_0000385336" description="Receptor-like protein kinase THESEUS 1">
    <location>
        <begin position="23"/>
        <end position="855"/>
    </location>
</feature>
<feature type="topological domain" description="Extracellular" evidence="1">
    <location>
        <begin position="23"/>
        <end position="415"/>
    </location>
</feature>
<feature type="transmembrane region" description="Helical" evidence="1">
    <location>
        <begin position="416"/>
        <end position="436"/>
    </location>
</feature>
<feature type="topological domain" description="Cytoplasmic" evidence="1">
    <location>
        <begin position="437"/>
        <end position="855"/>
    </location>
</feature>
<feature type="domain" description="Protein kinase" evidence="2">
    <location>
        <begin position="510"/>
        <end position="783"/>
    </location>
</feature>
<feature type="region of interest" description="Disordered" evidence="4">
    <location>
        <begin position="822"/>
        <end position="855"/>
    </location>
</feature>
<feature type="active site" description="Proton acceptor" evidence="2 3">
    <location>
        <position position="634"/>
    </location>
</feature>
<feature type="binding site" evidence="2">
    <location>
        <begin position="516"/>
        <end position="524"/>
    </location>
    <ligand>
        <name>ATP</name>
        <dbReference type="ChEBI" id="CHEBI:30616"/>
    </ligand>
</feature>
<feature type="binding site" evidence="2">
    <location>
        <position position="538"/>
    </location>
    <ligand>
        <name>ATP</name>
        <dbReference type="ChEBI" id="CHEBI:30616"/>
    </ligand>
</feature>
<feature type="glycosylation site" description="N-linked (GlcNAc...) asparagine" evidence="1">
    <location>
        <position position="41"/>
    </location>
</feature>
<feature type="glycosylation site" description="N-linked (GlcNAc...) asparagine" evidence="1">
    <location>
        <position position="64"/>
    </location>
</feature>
<feature type="glycosylation site" description="N-linked (GlcNAc...) asparagine" evidence="1">
    <location>
        <position position="75"/>
    </location>
</feature>
<feature type="glycosylation site" description="N-linked (GlcNAc...) asparagine" evidence="1">
    <location>
        <position position="114"/>
    </location>
</feature>
<feature type="glycosylation site" description="N-linked (GlcNAc...) asparagine" evidence="1">
    <location>
        <position position="118"/>
    </location>
</feature>
<feature type="glycosylation site" description="N-linked (GlcNAc...) asparagine" evidence="1">
    <location>
        <position position="136"/>
    </location>
</feature>
<feature type="glycosylation site" description="N-linked (GlcNAc...) asparagine" evidence="1">
    <location>
        <position position="143"/>
    </location>
</feature>
<feature type="glycosylation site" description="N-linked (GlcNAc...) asparagine" evidence="1">
    <location>
        <position position="154"/>
    </location>
</feature>
<feature type="glycosylation site" description="N-linked (GlcNAc...) asparagine" evidence="1">
    <location>
        <position position="168"/>
    </location>
</feature>
<feature type="glycosylation site" description="N-linked (GlcNAc...) asparagine" evidence="1">
    <location>
        <position position="225"/>
    </location>
</feature>
<feature type="glycosylation site" description="N-linked (GlcNAc...) asparagine" evidence="1">
    <location>
        <position position="242"/>
    </location>
</feature>
<feature type="glycosylation site" description="N-linked (GlcNAc...) asparagine" evidence="1">
    <location>
        <position position="288"/>
    </location>
</feature>
<feature type="glycosylation site" description="N-linked (GlcNAc...) asparagine" evidence="1">
    <location>
        <position position="353"/>
    </location>
</feature>
<feature type="glycosylation site" description="N-linked (GlcNAc...) asparagine" evidence="1">
    <location>
        <position position="376"/>
    </location>
</feature>
<feature type="mutagenesis site" description="In the1-1; partially restored hypocotyl growth defect of prc1-8." evidence="5">
    <original>G</original>
    <variation>D</variation>
    <location>
        <position position="37"/>
    </location>
</feature>
<feature type="mutagenesis site" description="In the1-2; partially restored hypocotyl growth defect of prc1-8." evidence="5">
    <original>E</original>
    <variation>K</variation>
    <location>
        <position position="150"/>
    </location>
</feature>
<sequence length="855" mass="93295">MVFTKSLLVLLWFLSCYTTTTSSALFNPPDNYLISCGSSQNITFQNRIFVPDSLHSSLVLKIGNSSVATSTTSNNSTNSIYQTARVFSSLASYRFKITSLGRHWIRLHFSPINNSTWNLTSASITVVTEDFVLLNNFSFNNFNGSYIFKEYTVNVTSEFLTLSFIPSNNSVVFVNAIEVVSVPDNLIPDQALALNPSTPFSGLSLLAFETVYRLNMGGPLLTSQNDTLGRQWDNDAEYLHVNSSVLVVTANPSSIKYSPSVTQETAPNMVYATADTMGDANVASPSFNVTWVLPVDPDFRYFVRVHFCDIVSQALNTLVFNLYVNDDLALGSLDLSTLTNGLKVPYFKDFISNGSVESSGVLTVSVGPDSQADITNATMNGLEVLKISNEAKSLSGVSSVKSLLPGGSGSKSKKKAVIIGSLVGAVTLILLIAVCCYCCLVASRKQRSTSPQEGGNGHPWLPLPLYGLSQTLTKSTASHKSATASCISLASTHLGRCFMFQEIMDATNKFDESSLLGVGGFGRVYKGTLEDGTKVAVKRGNPRSEQGMAEFRTEIEMLSKLRHRHLVSLIGYCDERSEMILVYEYMANGPLRSHLYGADLPPLSWKQRLEICIGAARGLHYLHTGASQSIIHRDVKTTNILLDENLVAKVADFGLSKTGPSLDQTHVSTAVKGSFGYLDPEYFRRQQLTEKSDVYSFGVVLMEVLCCRPALNPVLPREQVNIAEWAMAWQKKGLLDQIMDSNLTGKVNPASLKKFGETAEKCLAEYGVDRPSMGDVLWNLEYALQLEETSSALMEPDDNSTNHIPGIPMAPMEPFDNSMSIIDRGGVNSGTGTDDDAEDATTSAVFSQLVHPRGR</sequence>